<protein>
    <recommendedName>
        <fullName>Probable carboxylesterase 11</fullName>
    </recommendedName>
    <alternativeName>
        <fullName>AtCXE11</fullName>
        <ecNumber>3.1.1.1</ecNumber>
    </alternativeName>
</protein>
<sequence>MPSVGVKLYSVFFKFLLKHRLQNRIQSSGDESSSDPFGVTTRPEESVAAPNPLFTDGVATKDIHIDPLTSLSVRIFLPESALTPLEPSTSACVYSGKARTLNNIAGSDLLSRRNSLGSSNSLLSHKVESRRNSYGYTTGSSSPEAGSSDVYRGYAPSSSGGNSRKLPVMLQFHGGGWVSGSNDSVANDFFCRRMAKHCDIIVLAVGYRLAPENRYPAACEDGFKVLKWLGKQANLAECNKSMGNSRRPGGEVKKSEVNKHIVDAFGASLVEPWLANHADPSRCVLLGVSCGANIADYVARKAIEVGQNLDPVKVVAQVLMYPFFIGSVPTQSEIKQANSYFYDKPMCILAWKLFLPEEEFSLDHQAANPLVPGRSPPLKFMPPTLTIVAEHDWMRDRAIAYSEELRKVNVDAPVLEYKDAVHEFATLDMLLRTPQAQACAEDIAIWAKKYISLRGHEFSY</sequence>
<dbReference type="EC" id="3.1.1.1"/>
<dbReference type="EMBL" id="AP000381">
    <property type="protein sequence ID" value="BAB02127.1"/>
    <property type="molecule type" value="Genomic_DNA"/>
</dbReference>
<dbReference type="EMBL" id="CP002686">
    <property type="protein sequence ID" value="AEE77294.1"/>
    <property type="molecule type" value="Genomic_DNA"/>
</dbReference>
<dbReference type="EMBL" id="CP002686">
    <property type="protein sequence ID" value="AEE77295.1"/>
    <property type="molecule type" value="Genomic_DNA"/>
</dbReference>
<dbReference type="EMBL" id="BT012569">
    <property type="protein sequence ID" value="AAS99713.1"/>
    <property type="molecule type" value="mRNA"/>
</dbReference>
<dbReference type="EMBL" id="AK176881">
    <property type="protein sequence ID" value="BAD44644.1"/>
    <property type="molecule type" value="mRNA"/>
</dbReference>
<dbReference type="EMBL" id="BX824353">
    <property type="status" value="NOT_ANNOTATED_CDS"/>
    <property type="molecule type" value="mRNA"/>
</dbReference>
<dbReference type="RefSeq" id="NP_001030781.1">
    <molecule id="Q9LK21-2"/>
    <property type="nucleotide sequence ID" value="NM_001035704.2"/>
</dbReference>
<dbReference type="RefSeq" id="NP_189367.1">
    <molecule id="Q9LK21-1"/>
    <property type="nucleotide sequence ID" value="NM_113646.4"/>
</dbReference>
<dbReference type="SMR" id="Q9LK21"/>
<dbReference type="BioGRID" id="7681">
    <property type="interactions" value="1"/>
</dbReference>
<dbReference type="FunCoup" id="Q9LK21">
    <property type="interactions" value="337"/>
</dbReference>
<dbReference type="STRING" id="3702.Q9LK21"/>
<dbReference type="ESTHER" id="arath-CXE11">
    <property type="family name" value="Plant_carboxylesterase"/>
</dbReference>
<dbReference type="MEROPS" id="S09.A05"/>
<dbReference type="iPTMnet" id="Q9LK21"/>
<dbReference type="PaxDb" id="3702-AT3G27320.1"/>
<dbReference type="ProteomicsDB" id="220511">
    <molecule id="Q9LK21-1"/>
</dbReference>
<dbReference type="EnsemblPlants" id="AT3G27320.1">
    <molecule id="Q9LK21-1"/>
    <property type="protein sequence ID" value="AT3G27320.1"/>
    <property type="gene ID" value="AT3G27320"/>
</dbReference>
<dbReference type="EnsemblPlants" id="AT3G27320.2">
    <molecule id="Q9LK21-2"/>
    <property type="protein sequence ID" value="AT3G27320.2"/>
    <property type="gene ID" value="AT3G27320"/>
</dbReference>
<dbReference type="GeneID" id="822351"/>
<dbReference type="Gramene" id="AT3G27320.1">
    <molecule id="Q9LK21-1"/>
    <property type="protein sequence ID" value="AT3G27320.1"/>
    <property type="gene ID" value="AT3G27320"/>
</dbReference>
<dbReference type="Gramene" id="AT3G27320.2">
    <molecule id="Q9LK21-2"/>
    <property type="protein sequence ID" value="AT3G27320.2"/>
    <property type="gene ID" value="AT3G27320"/>
</dbReference>
<dbReference type="KEGG" id="ath:AT3G27320"/>
<dbReference type="Araport" id="AT3G27320"/>
<dbReference type="TAIR" id="AT3G27320"/>
<dbReference type="eggNOG" id="KOG1515">
    <property type="taxonomic scope" value="Eukaryota"/>
</dbReference>
<dbReference type="InParanoid" id="Q9LK21"/>
<dbReference type="OMA" id="SMCILAW"/>
<dbReference type="PhylomeDB" id="Q9LK21"/>
<dbReference type="PRO" id="PR:Q9LK21"/>
<dbReference type="Proteomes" id="UP000006548">
    <property type="component" value="Chromosome 3"/>
</dbReference>
<dbReference type="ExpressionAtlas" id="Q9LK21">
    <property type="expression patterns" value="baseline and differential"/>
</dbReference>
<dbReference type="GO" id="GO:0106435">
    <property type="term" value="F:carboxylesterase activity"/>
    <property type="evidence" value="ECO:0007669"/>
    <property type="project" value="UniProtKB-EC"/>
</dbReference>
<dbReference type="Gene3D" id="3.40.50.1820">
    <property type="entry name" value="alpha/beta hydrolase"/>
    <property type="match status" value="1"/>
</dbReference>
<dbReference type="InterPro" id="IPR013094">
    <property type="entry name" value="AB_hydrolase_3"/>
</dbReference>
<dbReference type="InterPro" id="IPR029058">
    <property type="entry name" value="AB_hydrolase_fold"/>
</dbReference>
<dbReference type="InterPro" id="IPR050466">
    <property type="entry name" value="Carboxylest/Gibb_receptor"/>
</dbReference>
<dbReference type="PANTHER" id="PTHR23024">
    <property type="entry name" value="ARYLACETAMIDE DEACETYLASE"/>
    <property type="match status" value="1"/>
</dbReference>
<dbReference type="PANTHER" id="PTHR23024:SF639">
    <property type="entry name" value="CARBOXYLESTERASE 11-RELATED"/>
    <property type="match status" value="1"/>
</dbReference>
<dbReference type="Pfam" id="PF07859">
    <property type="entry name" value="Abhydrolase_3"/>
    <property type="match status" value="1"/>
</dbReference>
<dbReference type="SUPFAM" id="SSF53474">
    <property type="entry name" value="alpha/beta-Hydrolases"/>
    <property type="match status" value="1"/>
</dbReference>
<gene>
    <name type="primary">CXE11</name>
    <name type="ordered locus">At3g27320</name>
    <name type="ORF">K17E12.14</name>
</gene>
<comment type="function">
    <text evidence="1">Carboxylesterase acting on esters with varying acyl chain length.</text>
</comment>
<comment type="catalytic activity">
    <reaction>
        <text>a carboxylic ester + H2O = an alcohol + a carboxylate + H(+)</text>
        <dbReference type="Rhea" id="RHEA:21164"/>
        <dbReference type="ChEBI" id="CHEBI:15377"/>
        <dbReference type="ChEBI" id="CHEBI:15378"/>
        <dbReference type="ChEBI" id="CHEBI:29067"/>
        <dbReference type="ChEBI" id="CHEBI:30879"/>
        <dbReference type="ChEBI" id="CHEBI:33308"/>
        <dbReference type="EC" id="3.1.1.1"/>
    </reaction>
</comment>
<comment type="alternative products">
    <event type="alternative splicing"/>
    <isoform>
        <id>Q9LK21-1</id>
        <name>1</name>
        <sequence type="displayed"/>
    </isoform>
    <isoform>
        <id>Q9LK21-2</id>
        <name>2</name>
        <sequence type="described" ref="VSP_040307"/>
    </isoform>
</comment>
<comment type="tissue specificity">
    <text evidence="4">Expressed in roots, leaves, stems, flowers and siliques.</text>
</comment>
<comment type="similarity">
    <text evidence="7">Belongs to the 'GDXG' lipolytic enzyme family.</text>
</comment>
<comment type="sequence caution" evidence="7">
    <conflict type="miscellaneous discrepancy">
        <sequence resource="EMBL" id="BX824353"/>
    </conflict>
    <text>Sequencing errors.</text>
</comment>
<name>CXE11_ARATH</name>
<reference key="1">
    <citation type="journal article" date="2000" name="DNA Res.">
        <title>Structural analysis of Arabidopsis thaliana chromosome 3. II. Sequence features of the 4,251,695 bp regions covered by 90 P1, TAC and BAC clones.</title>
        <authorList>
            <person name="Kaneko T."/>
            <person name="Katoh T."/>
            <person name="Sato S."/>
            <person name="Nakamura Y."/>
            <person name="Asamizu E."/>
            <person name="Tabata S."/>
        </authorList>
    </citation>
    <scope>NUCLEOTIDE SEQUENCE [LARGE SCALE GENOMIC DNA]</scope>
    <source>
        <strain>cv. Columbia</strain>
    </source>
</reference>
<reference key="2">
    <citation type="journal article" date="2017" name="Plant J.">
        <title>Araport11: a complete reannotation of the Arabidopsis thaliana reference genome.</title>
        <authorList>
            <person name="Cheng C.Y."/>
            <person name="Krishnakumar V."/>
            <person name="Chan A.P."/>
            <person name="Thibaud-Nissen F."/>
            <person name="Schobel S."/>
            <person name="Town C.D."/>
        </authorList>
    </citation>
    <scope>GENOME REANNOTATION</scope>
    <source>
        <strain>cv. Columbia</strain>
    </source>
</reference>
<reference key="3">
    <citation type="submission" date="2004-12" db="EMBL/GenBank/DDBJ databases">
        <title>Arabidopsis ORF clones.</title>
        <authorList>
            <person name="Shinn P."/>
            <person name="Chen H."/>
            <person name="Cheuk R.F."/>
            <person name="Kim C.J."/>
            <person name="Carninci P."/>
            <person name="Hayashizaki Y."/>
            <person name="Ishida J."/>
            <person name="Kamiya A."/>
            <person name="Kawai J."/>
            <person name="Narusaka M."/>
            <person name="Sakurai T."/>
            <person name="Satou M."/>
            <person name="Seki M."/>
            <person name="Shinozaki K."/>
            <person name="Ecker J.R."/>
        </authorList>
    </citation>
    <scope>NUCLEOTIDE SEQUENCE [LARGE SCALE MRNA] (ISOFORM 2)</scope>
    <source>
        <strain>cv. Columbia</strain>
    </source>
</reference>
<reference key="4">
    <citation type="submission" date="2004-09" db="EMBL/GenBank/DDBJ databases">
        <title>Large-scale analysis of RIKEN Arabidopsis full-length (RAFL) cDNAs.</title>
        <authorList>
            <person name="Totoki Y."/>
            <person name="Seki M."/>
            <person name="Ishida J."/>
            <person name="Nakajima M."/>
            <person name="Enju A."/>
            <person name="Kamiya A."/>
            <person name="Narusaka M."/>
            <person name="Shin-i T."/>
            <person name="Nakagawa M."/>
            <person name="Sakamoto N."/>
            <person name="Oishi K."/>
            <person name="Kohara Y."/>
            <person name="Kobayashi M."/>
            <person name="Toyoda A."/>
            <person name="Sakaki Y."/>
            <person name="Sakurai T."/>
            <person name="Iida K."/>
            <person name="Akiyama K."/>
            <person name="Satou M."/>
            <person name="Toyoda T."/>
            <person name="Konagaya A."/>
            <person name="Carninci P."/>
            <person name="Kawai J."/>
            <person name="Hayashizaki Y."/>
            <person name="Shinozaki K."/>
        </authorList>
    </citation>
    <scope>NUCLEOTIDE SEQUENCE [LARGE SCALE MRNA] (ISOFORM 2)</scope>
    <source>
        <strain>cv. Columbia</strain>
    </source>
</reference>
<reference key="5">
    <citation type="journal article" date="2004" name="Genome Res.">
        <title>Whole genome sequence comparisons and 'full-length' cDNA sequences: a combined approach to evaluate and improve Arabidopsis genome annotation.</title>
        <authorList>
            <person name="Castelli V."/>
            <person name="Aury J.-M."/>
            <person name="Jaillon O."/>
            <person name="Wincker P."/>
            <person name="Clepet C."/>
            <person name="Menard M."/>
            <person name="Cruaud C."/>
            <person name="Quetier F."/>
            <person name="Scarpelli C."/>
            <person name="Schaechter V."/>
            <person name="Temple G."/>
            <person name="Caboche M."/>
            <person name="Weissenbach J."/>
            <person name="Salanoubat M."/>
        </authorList>
    </citation>
    <scope>NUCLEOTIDE SEQUENCE [LARGE SCALE MRNA] (ISOFORM 1)</scope>
    <source>
        <strain>cv. Columbia</strain>
    </source>
</reference>
<reference key="6">
    <citation type="journal article" date="2003" name="J. Mol. Evol.">
        <title>The carboxylesterase gene family from Arabidopsis thaliana.</title>
        <authorList>
            <person name="Marshall S.D."/>
            <person name="Putterill J.J."/>
            <person name="Plummer K.M."/>
            <person name="Newcomb R.D."/>
        </authorList>
    </citation>
    <scope>TISSUE SPECIFICITY</scope>
    <scope>GENE FAMILY</scope>
    <scope>NOMENCLATURE</scope>
</reference>
<accession>Q9LK21</accession>
<accession>Q6NKX4</accession>
<organism>
    <name type="scientific">Arabidopsis thaliana</name>
    <name type="common">Mouse-ear cress</name>
    <dbReference type="NCBI Taxonomy" id="3702"/>
    <lineage>
        <taxon>Eukaryota</taxon>
        <taxon>Viridiplantae</taxon>
        <taxon>Streptophyta</taxon>
        <taxon>Embryophyta</taxon>
        <taxon>Tracheophyta</taxon>
        <taxon>Spermatophyta</taxon>
        <taxon>Magnoliopsida</taxon>
        <taxon>eudicotyledons</taxon>
        <taxon>Gunneridae</taxon>
        <taxon>Pentapetalae</taxon>
        <taxon>rosids</taxon>
        <taxon>malvids</taxon>
        <taxon>Brassicales</taxon>
        <taxon>Brassicaceae</taxon>
        <taxon>Camelineae</taxon>
        <taxon>Arabidopsis</taxon>
    </lineage>
</organism>
<feature type="chain" id="PRO_0000402556" description="Probable carboxylesterase 11">
    <location>
        <begin position="1"/>
        <end position="460"/>
    </location>
</feature>
<feature type="region of interest" description="Disordered" evidence="3">
    <location>
        <begin position="26"/>
        <end position="52"/>
    </location>
</feature>
<feature type="region of interest" description="Disordered" evidence="3">
    <location>
        <begin position="132"/>
        <end position="161"/>
    </location>
</feature>
<feature type="short sequence motif" description="Involved in the stabilization of the negatively charged intermediate by the formation of the oxyanion hole" evidence="2">
    <location>
        <begin position="173"/>
        <end position="175"/>
    </location>
</feature>
<feature type="compositionally biased region" description="Polar residues" evidence="3">
    <location>
        <begin position="26"/>
        <end position="35"/>
    </location>
</feature>
<feature type="compositionally biased region" description="Polar residues" evidence="3">
    <location>
        <begin position="132"/>
        <end position="145"/>
    </location>
</feature>
<feature type="active site" evidence="2">
    <location>
        <position position="289"/>
    </location>
</feature>
<feature type="active site" evidence="2">
    <location>
        <position position="392"/>
    </location>
</feature>
<feature type="active site" evidence="2">
    <location>
        <position position="422"/>
    </location>
</feature>
<feature type="splice variant" id="VSP_040307" description="In isoform 2." evidence="5 6">
    <location>
        <begin position="96"/>
        <end position="127"/>
    </location>
</feature>
<feature type="sequence conflict" description="In Ref. 3; AAS99713 and 4; BAD44644." evidence="7" ref="3 4">
    <original>A</original>
    <variation>G</variation>
    <location>
        <position position="218"/>
    </location>
</feature>
<keyword id="KW-0025">Alternative splicing</keyword>
<keyword id="KW-0378">Hydrolase</keyword>
<keyword id="KW-1185">Reference proteome</keyword>
<keyword id="KW-0719">Serine esterase</keyword>
<proteinExistence type="evidence at transcript level"/>
<evidence type="ECO:0000250" key="1"/>
<evidence type="ECO:0000250" key="2">
    <source>
        <dbReference type="UniProtKB" id="Q5NUF3"/>
    </source>
</evidence>
<evidence type="ECO:0000256" key="3">
    <source>
        <dbReference type="SAM" id="MobiDB-lite"/>
    </source>
</evidence>
<evidence type="ECO:0000269" key="4">
    <source>
    </source>
</evidence>
<evidence type="ECO:0000303" key="5">
    <source ref="3"/>
</evidence>
<evidence type="ECO:0000303" key="6">
    <source ref="4"/>
</evidence>
<evidence type="ECO:0000305" key="7"/>